<protein>
    <recommendedName>
        <fullName evidence="1">Apolipoprotein N-acyltransferase</fullName>
        <shortName evidence="1">ALP N-acyltransferase</shortName>
        <ecNumber evidence="1">2.3.1.269</ecNumber>
    </recommendedName>
</protein>
<reference key="1">
    <citation type="journal article" date="2001" name="DNA Res.">
        <title>Complete genomic sequence of the filamentous nitrogen-fixing cyanobacterium Anabaena sp. strain PCC 7120.</title>
        <authorList>
            <person name="Kaneko T."/>
            <person name="Nakamura Y."/>
            <person name="Wolk C.P."/>
            <person name="Kuritz T."/>
            <person name="Sasamoto S."/>
            <person name="Watanabe A."/>
            <person name="Iriguchi M."/>
            <person name="Ishikawa A."/>
            <person name="Kawashima K."/>
            <person name="Kimura T."/>
            <person name="Kishida Y."/>
            <person name="Kohara M."/>
            <person name="Matsumoto M."/>
            <person name="Matsuno A."/>
            <person name="Muraki A."/>
            <person name="Nakazaki N."/>
            <person name="Shimpo S."/>
            <person name="Sugimoto M."/>
            <person name="Takazawa M."/>
            <person name="Yamada M."/>
            <person name="Yasuda M."/>
            <person name="Tabata S."/>
        </authorList>
    </citation>
    <scope>NUCLEOTIDE SEQUENCE [LARGE SCALE GENOMIC DNA]</scope>
    <source>
        <strain>PCC 7120 / SAG 25.82 / UTEX 2576</strain>
    </source>
</reference>
<feature type="chain" id="PRO_0000178042" description="Apolipoprotein N-acyltransferase">
    <location>
        <begin position="1"/>
        <end position="500"/>
    </location>
</feature>
<feature type="transmembrane region" description="Helical" evidence="1">
    <location>
        <begin position="5"/>
        <end position="25"/>
    </location>
</feature>
<feature type="transmembrane region" description="Helical" evidence="1">
    <location>
        <begin position="38"/>
        <end position="58"/>
    </location>
</feature>
<feature type="transmembrane region" description="Helical" evidence="1">
    <location>
        <begin position="74"/>
        <end position="94"/>
    </location>
</feature>
<feature type="transmembrane region" description="Helical" evidence="1">
    <location>
        <begin position="111"/>
        <end position="131"/>
    </location>
</feature>
<feature type="transmembrane region" description="Helical" evidence="1">
    <location>
        <begin position="145"/>
        <end position="165"/>
    </location>
</feature>
<feature type="transmembrane region" description="Helical" evidence="1">
    <location>
        <begin position="185"/>
        <end position="205"/>
    </location>
</feature>
<feature type="transmembrane region" description="Helical" evidence="1">
    <location>
        <begin position="469"/>
        <end position="489"/>
    </location>
</feature>
<feature type="domain" description="CN hydrolase" evidence="1">
    <location>
        <begin position="215"/>
        <end position="462"/>
    </location>
</feature>
<feature type="active site" description="Proton acceptor" evidence="1">
    <location>
        <position position="261"/>
    </location>
</feature>
<feature type="active site" evidence="1">
    <location>
        <position position="318"/>
    </location>
</feature>
<feature type="active site" description="Nucleophile" evidence="1">
    <location>
        <position position="369"/>
    </location>
</feature>
<comment type="function">
    <text evidence="1">Catalyzes the phospholipid dependent N-acylation of the N-terminal cysteine of apolipoprotein, the last step in lipoprotein maturation.</text>
</comment>
<comment type="catalytic activity">
    <reaction evidence="1">
        <text>N-terminal S-1,2-diacyl-sn-glyceryl-L-cysteinyl-[lipoprotein] + a glycerophospholipid = N-acyl-S-1,2-diacyl-sn-glyceryl-L-cysteinyl-[lipoprotein] + a 2-acyl-sn-glycero-3-phospholipid + H(+)</text>
        <dbReference type="Rhea" id="RHEA:48228"/>
        <dbReference type="Rhea" id="RHEA-COMP:14681"/>
        <dbReference type="Rhea" id="RHEA-COMP:14684"/>
        <dbReference type="ChEBI" id="CHEBI:15378"/>
        <dbReference type="ChEBI" id="CHEBI:136912"/>
        <dbReference type="ChEBI" id="CHEBI:140656"/>
        <dbReference type="ChEBI" id="CHEBI:140657"/>
        <dbReference type="ChEBI" id="CHEBI:140660"/>
        <dbReference type="EC" id="2.3.1.269"/>
    </reaction>
</comment>
<comment type="pathway">
    <text evidence="1">Protein modification; lipoprotein biosynthesis (N-acyl transfer).</text>
</comment>
<comment type="subcellular location">
    <subcellularLocation>
        <location evidence="1">Cell inner membrane</location>
        <topology evidence="1">Multi-pass membrane protein</topology>
    </subcellularLocation>
</comment>
<comment type="similarity">
    <text evidence="1">Belongs to the CN hydrolase family. Apolipoprotein N-acyltransferase subfamily.</text>
</comment>
<dbReference type="EC" id="2.3.1.269" evidence="1"/>
<dbReference type="EMBL" id="BA000019">
    <property type="protein sequence ID" value="BAB72816.1"/>
    <property type="molecule type" value="Genomic_DNA"/>
</dbReference>
<dbReference type="PIR" id="AI1913">
    <property type="entry name" value="AI1913"/>
</dbReference>
<dbReference type="SMR" id="Q8YYI9"/>
<dbReference type="STRING" id="103690.gene:10492872"/>
<dbReference type="KEGG" id="ana:all0859"/>
<dbReference type="eggNOG" id="COG0815">
    <property type="taxonomic scope" value="Bacteria"/>
</dbReference>
<dbReference type="UniPathway" id="UPA00666"/>
<dbReference type="Proteomes" id="UP000002483">
    <property type="component" value="Chromosome"/>
</dbReference>
<dbReference type="GO" id="GO:0005886">
    <property type="term" value="C:plasma membrane"/>
    <property type="evidence" value="ECO:0007669"/>
    <property type="project" value="UniProtKB-SubCell"/>
</dbReference>
<dbReference type="GO" id="GO:0016410">
    <property type="term" value="F:N-acyltransferase activity"/>
    <property type="evidence" value="ECO:0007669"/>
    <property type="project" value="UniProtKB-UniRule"/>
</dbReference>
<dbReference type="GO" id="GO:0042158">
    <property type="term" value="P:lipoprotein biosynthetic process"/>
    <property type="evidence" value="ECO:0007669"/>
    <property type="project" value="UniProtKB-UniRule"/>
</dbReference>
<dbReference type="CDD" id="cd07571">
    <property type="entry name" value="ALP_N-acyl_transferase"/>
    <property type="match status" value="1"/>
</dbReference>
<dbReference type="Gene3D" id="3.60.110.10">
    <property type="entry name" value="Carbon-nitrogen hydrolase"/>
    <property type="match status" value="1"/>
</dbReference>
<dbReference type="HAMAP" id="MF_01148">
    <property type="entry name" value="Lnt"/>
    <property type="match status" value="1"/>
</dbReference>
<dbReference type="InterPro" id="IPR004563">
    <property type="entry name" value="Apolipo_AcylTrfase"/>
</dbReference>
<dbReference type="InterPro" id="IPR003010">
    <property type="entry name" value="C-N_Hydrolase"/>
</dbReference>
<dbReference type="InterPro" id="IPR036526">
    <property type="entry name" value="C-N_Hydrolase_sf"/>
</dbReference>
<dbReference type="InterPro" id="IPR045378">
    <property type="entry name" value="LNT_N"/>
</dbReference>
<dbReference type="NCBIfam" id="TIGR00546">
    <property type="entry name" value="lnt"/>
    <property type="match status" value="1"/>
</dbReference>
<dbReference type="PANTHER" id="PTHR38686">
    <property type="entry name" value="APOLIPOPROTEIN N-ACYLTRANSFERASE"/>
    <property type="match status" value="1"/>
</dbReference>
<dbReference type="PANTHER" id="PTHR38686:SF1">
    <property type="entry name" value="APOLIPOPROTEIN N-ACYLTRANSFERASE"/>
    <property type="match status" value="1"/>
</dbReference>
<dbReference type="Pfam" id="PF00795">
    <property type="entry name" value="CN_hydrolase"/>
    <property type="match status" value="1"/>
</dbReference>
<dbReference type="Pfam" id="PF20154">
    <property type="entry name" value="LNT_N"/>
    <property type="match status" value="1"/>
</dbReference>
<dbReference type="SUPFAM" id="SSF56317">
    <property type="entry name" value="Carbon-nitrogen hydrolase"/>
    <property type="match status" value="1"/>
</dbReference>
<dbReference type="PROSITE" id="PS50263">
    <property type="entry name" value="CN_HYDROLASE"/>
    <property type="match status" value="1"/>
</dbReference>
<accession>Q8YYI9</accession>
<sequence>MGLTVAPFAAWFLAWIALAPLWIFVVSSKRKNYPPSSLLLLGLTWGIGYHGVALFWITGIHPMDWLGVPWWPSLAITIFCWSFISFYGGLFGAIWAACLTHISEQKSWLRILIGTAMWCVLESLWSAGPLWWSSLAYTQSPHNLAILHLGQISGPNLVTAAIVSVNGIVAEAWLNRKQGLLGRYLAIATGLLITLHLIGFGLYTAPIAKSSDTALKVGIVQGNIPNKIKLLPQGLSRAITGYTDGYLTLVNQGVEAVLTPEGALPFFQRNLPTTPLVSAVREKGVVAWIGAFGDRGRSYTNSLFTVNSQGEITSRYDKSKLVPLGEYIPFEGIIGGLVQRLSPLDEHQVHGSPNQIFDTPFGRAIVGICYESAFPEVFRSQAAAGGQFILSSSNDAHYSAAMPFQHHAQDIMRAIETDRWSARATNTGYSAFVDPHGRTLWISGYNTYETHAETIYRRQTQNLYVRWGDWFTPLLVGLSFLGWSLNIFWRNDANANSKLR</sequence>
<proteinExistence type="inferred from homology"/>
<keyword id="KW-0012">Acyltransferase</keyword>
<keyword id="KW-0997">Cell inner membrane</keyword>
<keyword id="KW-1003">Cell membrane</keyword>
<keyword id="KW-0472">Membrane</keyword>
<keyword id="KW-1185">Reference proteome</keyword>
<keyword id="KW-0808">Transferase</keyword>
<keyword id="KW-0812">Transmembrane</keyword>
<keyword id="KW-1133">Transmembrane helix</keyword>
<evidence type="ECO:0000255" key="1">
    <source>
        <dbReference type="HAMAP-Rule" id="MF_01148"/>
    </source>
</evidence>
<organism>
    <name type="scientific">Nostoc sp. (strain PCC 7120 / SAG 25.82 / UTEX 2576)</name>
    <dbReference type="NCBI Taxonomy" id="103690"/>
    <lineage>
        <taxon>Bacteria</taxon>
        <taxon>Bacillati</taxon>
        <taxon>Cyanobacteriota</taxon>
        <taxon>Cyanophyceae</taxon>
        <taxon>Nostocales</taxon>
        <taxon>Nostocaceae</taxon>
        <taxon>Nostoc</taxon>
    </lineage>
</organism>
<name>LNT_NOSS1</name>
<gene>
    <name evidence="1" type="primary">lnt</name>
    <name type="ordered locus">all0859</name>
</gene>